<reference key="1">
    <citation type="journal article" date="1995" name="Dev. Biol.">
        <title>Activin and its receptors during gastrulation and the later phases of mesoderm development in the chick embryo.</title>
        <authorList>
            <person name="Stern C.D."/>
            <person name="Yu R.T."/>
            <person name="Kakizuka A."/>
            <person name="Kintner C.R."/>
            <person name="Mathews L.S."/>
            <person name="Vale W.W."/>
            <person name="Evans R.M."/>
            <person name="Umesono K."/>
        </authorList>
    </citation>
    <scope>NUCLEOTIDE SEQUENCE [MRNA]</scope>
    <scope>DEVELOPMENTAL STAGE</scope>
    <scope>FUNCTION</scope>
    <scope>INDUCTION</scope>
</reference>
<reference key="2">
    <citation type="journal article" date="2001" name="J. Neurobiol.">
        <title>Activin type II receptors in embryonic dorsal root ganglion neurons of the chicken.</title>
        <authorList>
            <person name="Kos K."/>
            <person name="Fine L."/>
            <person name="Coulombe J.N."/>
        </authorList>
    </citation>
    <scope>FUNCTION</scope>
    <scope>DEVELOPMENTAL STAGE</scope>
</reference>
<reference key="3">
    <citation type="journal article" date="2005" name="Dev. Biol.">
        <title>The activin signaling pathway promotes differentiation of dI3 interneurons in the spinal neural tube.</title>
        <authorList>
            <person name="Timmer J."/>
            <person name="Chesnutt C."/>
            <person name="Niswander L."/>
        </authorList>
    </citation>
    <scope>FUNCTION</scope>
    <scope>DEVELOPMENTAL STAGE</scope>
</reference>
<reference key="4">
    <citation type="journal article" date="2005" name="J. Endocrinol.">
        <title>Variation in pituitary expression of mRNAs encoding the putative inhibin co-receptor (betaglycan) and type-I and type-II activin receptors during the chicken ovulatory cycle.</title>
        <authorList>
            <person name="Lovell T.M."/>
            <person name="Knight P.G."/>
            <person name="Gladwell R.T."/>
        </authorList>
    </citation>
    <scope>TISSUE SPECIFICITY</scope>
</reference>
<reference key="5">
    <citation type="journal article" date="2006" name="J. Endocrinol.">
        <title>Differential expression of mRNAs encoding the putative inhibin co-receptor (betaglycan) and activin type-I and type-II receptors in preovulatory and prehierarchical follicles of the laying hen ovary.</title>
        <authorList>
            <person name="Lovell T.M."/>
            <person name="Knight P.G."/>
            <person name="Gladwell R.T."/>
        </authorList>
    </citation>
    <scope>FUNCTION</scope>
    <scope>TISSUE SPECIFICITY</scope>
</reference>
<sequence length="512" mass="57776">MSASWLTLAVLCATLGAGPGHGEAETRECIYYNANWELEKTNQSGVERCEGEKDKRLHCYASWRNNSGSIELVKKGCWLDDFNCYDRQECVATEENPQVFFCCCEGNYCNEKFTHLPEVTGPEVIYEPPPPTPSLLNILVYSLLPIAVLSVAILLAFWMYRHRKPPYGHVDINEDPGPPPPSPLVGLKPLQLLEIKARGRFGCVWKAQLMNDYVAVKIFPIQDKQSWQSEREIFNTPGMKHENLLQFIAAEKRGTNLETELWLITAFHDKGSLTDYLKGNIISWNELCHVAETMARGLSYLHEDVPWCKGEGHKPAIAHRDFKSKNVLLKNDLTAVLADFGLAVRFEPGKPPGDTHGQVGTRRYMAPEVLEGAINFQRDAFLRIDMYAMGLVLWELVSRCRAVDGPVDEYMLPFEEEIGQHPSLEDLQEVVVHKKMRPVFKDHWLKHPGLAQLCVTIEECWDHDAEARLSAGCVEERIAQIRKSVNGTTSDCLVSIVTSVTNVDLPPKESSI</sequence>
<proteinExistence type="evidence at transcript level"/>
<accession>Q90670</accession>
<keyword id="KW-0067">ATP-binding</keyword>
<keyword id="KW-1015">Disulfide bond</keyword>
<keyword id="KW-0325">Glycoprotein</keyword>
<keyword id="KW-0418">Kinase</keyword>
<keyword id="KW-0460">Magnesium</keyword>
<keyword id="KW-0464">Manganese</keyword>
<keyword id="KW-0472">Membrane</keyword>
<keyword id="KW-0479">Metal-binding</keyword>
<keyword id="KW-0547">Nucleotide-binding</keyword>
<keyword id="KW-0675">Receptor</keyword>
<keyword id="KW-1185">Reference proteome</keyword>
<keyword id="KW-0723">Serine/threonine-protein kinase</keyword>
<keyword id="KW-0732">Signal</keyword>
<keyword id="KW-0808">Transferase</keyword>
<keyword id="KW-0812">Transmembrane</keyword>
<keyword id="KW-1133">Transmembrane helix</keyword>
<organism>
    <name type="scientific">Gallus gallus</name>
    <name type="common">Chicken</name>
    <dbReference type="NCBI Taxonomy" id="9031"/>
    <lineage>
        <taxon>Eukaryota</taxon>
        <taxon>Metazoa</taxon>
        <taxon>Chordata</taxon>
        <taxon>Craniata</taxon>
        <taxon>Vertebrata</taxon>
        <taxon>Euteleostomi</taxon>
        <taxon>Archelosauria</taxon>
        <taxon>Archosauria</taxon>
        <taxon>Dinosauria</taxon>
        <taxon>Saurischia</taxon>
        <taxon>Theropoda</taxon>
        <taxon>Coelurosauria</taxon>
        <taxon>Aves</taxon>
        <taxon>Neognathae</taxon>
        <taxon>Galloanserae</taxon>
        <taxon>Galliformes</taxon>
        <taxon>Phasianidae</taxon>
        <taxon>Phasianinae</taxon>
        <taxon>Gallus</taxon>
    </lineage>
</organism>
<dbReference type="EC" id="2.7.11.30"/>
<dbReference type="EMBL" id="U31223">
    <property type="protein sequence ID" value="AAA87842.1"/>
    <property type="molecule type" value="mRNA"/>
</dbReference>
<dbReference type="RefSeq" id="NP_989648.1">
    <property type="nucleotide sequence ID" value="NM_204317.2"/>
</dbReference>
<dbReference type="SMR" id="Q90670"/>
<dbReference type="FunCoup" id="Q90670">
    <property type="interactions" value="535"/>
</dbReference>
<dbReference type="STRING" id="9031.ENSGALP00000009931"/>
<dbReference type="GlyCosmos" id="Q90670">
    <property type="glycosylation" value="2 sites, No reported glycans"/>
</dbReference>
<dbReference type="GlyGen" id="Q90670">
    <property type="glycosylation" value="3 sites"/>
</dbReference>
<dbReference type="PaxDb" id="9031-ENSGALP00000009931"/>
<dbReference type="Ensembl" id="ENSGALT00010065687.1">
    <property type="protein sequence ID" value="ENSGALP00010039953.1"/>
    <property type="gene ID" value="ENSGALG00010027103.1"/>
</dbReference>
<dbReference type="GeneID" id="374213"/>
<dbReference type="KEGG" id="gga:374213"/>
<dbReference type="CTD" id="93"/>
<dbReference type="VEuPathDB" id="HostDB:geneid_374213"/>
<dbReference type="eggNOG" id="KOG3653">
    <property type="taxonomic scope" value="Eukaryota"/>
</dbReference>
<dbReference type="GeneTree" id="ENSGT00940000156210"/>
<dbReference type="InParanoid" id="Q90670"/>
<dbReference type="OMA" id="WLELCRI"/>
<dbReference type="OrthoDB" id="547665at2759"/>
<dbReference type="PhylomeDB" id="Q90670"/>
<dbReference type="PRO" id="PR:Q90670"/>
<dbReference type="Proteomes" id="UP000000539">
    <property type="component" value="Chromosome 2"/>
</dbReference>
<dbReference type="GO" id="GO:0048179">
    <property type="term" value="C:activin receptor complex"/>
    <property type="evidence" value="ECO:0000318"/>
    <property type="project" value="GO_Central"/>
</dbReference>
<dbReference type="GO" id="GO:0045178">
    <property type="term" value="C:basal part of cell"/>
    <property type="evidence" value="ECO:0000314"/>
    <property type="project" value="AgBase"/>
</dbReference>
<dbReference type="GO" id="GO:0005886">
    <property type="term" value="C:plasma membrane"/>
    <property type="evidence" value="ECO:0000318"/>
    <property type="project" value="GO_Central"/>
</dbReference>
<dbReference type="GO" id="GO:0048185">
    <property type="term" value="F:activin binding"/>
    <property type="evidence" value="ECO:0000314"/>
    <property type="project" value="AgBase"/>
</dbReference>
<dbReference type="GO" id="GO:0017002">
    <property type="term" value="F:activin receptor activity"/>
    <property type="evidence" value="ECO:0000318"/>
    <property type="project" value="GO_Central"/>
</dbReference>
<dbReference type="GO" id="GO:0005524">
    <property type="term" value="F:ATP binding"/>
    <property type="evidence" value="ECO:0007669"/>
    <property type="project" value="UniProtKB-KW"/>
</dbReference>
<dbReference type="GO" id="GO:0046872">
    <property type="term" value="F:metal ion binding"/>
    <property type="evidence" value="ECO:0007669"/>
    <property type="project" value="UniProtKB-KW"/>
</dbReference>
<dbReference type="GO" id="GO:0032924">
    <property type="term" value="P:activin receptor signaling pathway"/>
    <property type="evidence" value="ECO:0000315"/>
    <property type="project" value="AgBase"/>
</dbReference>
<dbReference type="GO" id="GO:0009798">
    <property type="term" value="P:axis specification"/>
    <property type="evidence" value="ECO:0000315"/>
    <property type="project" value="AgBase"/>
</dbReference>
<dbReference type="GO" id="GO:0008283">
    <property type="term" value="P:cell population proliferation"/>
    <property type="evidence" value="ECO:0000315"/>
    <property type="project" value="AgBase"/>
</dbReference>
<dbReference type="GO" id="GO:0071363">
    <property type="term" value="P:cellular response to growth factor stimulus"/>
    <property type="evidence" value="ECO:0000318"/>
    <property type="project" value="GO_Central"/>
</dbReference>
<dbReference type="GO" id="GO:0061550">
    <property type="term" value="P:cranial ganglion development"/>
    <property type="evidence" value="ECO:0000315"/>
    <property type="project" value="AgBase"/>
</dbReference>
<dbReference type="GO" id="GO:0048333">
    <property type="term" value="P:mesodermal cell differentiation"/>
    <property type="evidence" value="ECO:0000315"/>
    <property type="project" value="AgBase"/>
</dbReference>
<dbReference type="GO" id="GO:0007389">
    <property type="term" value="P:pattern specification process"/>
    <property type="evidence" value="ECO:0000318"/>
    <property type="project" value="GO_Central"/>
</dbReference>
<dbReference type="GO" id="GO:0043525">
    <property type="term" value="P:positive regulation of neuron apoptotic process"/>
    <property type="evidence" value="ECO:0000315"/>
    <property type="project" value="AgBase"/>
</dbReference>
<dbReference type="CDD" id="cd14140">
    <property type="entry name" value="STKc_ACVR2b"/>
    <property type="match status" value="1"/>
</dbReference>
<dbReference type="CDD" id="cd23632">
    <property type="entry name" value="TFP_LU_ECD_ACVR2B"/>
    <property type="match status" value="1"/>
</dbReference>
<dbReference type="FunFam" id="1.10.510.10:FF:000099">
    <property type="entry name" value="Serine/threonine-protein kinase receptor"/>
    <property type="match status" value="1"/>
</dbReference>
<dbReference type="FunFam" id="2.10.60.10:FF:000002">
    <property type="entry name" value="Serine/threonine-protein kinase receptor"/>
    <property type="match status" value="1"/>
</dbReference>
<dbReference type="FunFam" id="3.30.200.20:FF:000094">
    <property type="entry name" value="Serine/threonine-protein kinase receptor"/>
    <property type="match status" value="1"/>
</dbReference>
<dbReference type="Gene3D" id="2.10.60.10">
    <property type="entry name" value="CD59"/>
    <property type="match status" value="1"/>
</dbReference>
<dbReference type="Gene3D" id="3.30.200.20">
    <property type="entry name" value="Phosphorylase Kinase, domain 1"/>
    <property type="match status" value="1"/>
</dbReference>
<dbReference type="Gene3D" id="1.10.510.10">
    <property type="entry name" value="Transferase(Phosphotransferase) domain 1"/>
    <property type="match status" value="1"/>
</dbReference>
<dbReference type="InterPro" id="IPR000472">
    <property type="entry name" value="Activin_recp"/>
</dbReference>
<dbReference type="InterPro" id="IPR011009">
    <property type="entry name" value="Kinase-like_dom_sf"/>
</dbReference>
<dbReference type="InterPro" id="IPR000719">
    <property type="entry name" value="Prot_kinase_dom"/>
</dbReference>
<dbReference type="InterPro" id="IPR008271">
    <property type="entry name" value="Ser/Thr_kinase_AS"/>
</dbReference>
<dbReference type="InterPro" id="IPR045860">
    <property type="entry name" value="Snake_toxin-like_sf"/>
</dbReference>
<dbReference type="InterPro" id="IPR000333">
    <property type="entry name" value="TGFB_receptor"/>
</dbReference>
<dbReference type="PANTHER" id="PTHR23255:SF70">
    <property type="entry name" value="ACTIVIN RECEPTOR TYPE-2B"/>
    <property type="match status" value="1"/>
</dbReference>
<dbReference type="PANTHER" id="PTHR23255">
    <property type="entry name" value="TRANSFORMING GROWTH FACTOR-BETA RECEPTOR TYPE I AND II"/>
    <property type="match status" value="1"/>
</dbReference>
<dbReference type="Pfam" id="PF01064">
    <property type="entry name" value="Activin_recp"/>
    <property type="match status" value="1"/>
</dbReference>
<dbReference type="Pfam" id="PF00069">
    <property type="entry name" value="Pkinase"/>
    <property type="match status" value="1"/>
</dbReference>
<dbReference type="PRINTS" id="PR00653">
    <property type="entry name" value="ACTIVIN2R"/>
</dbReference>
<dbReference type="SUPFAM" id="SSF56112">
    <property type="entry name" value="Protein kinase-like (PK-like)"/>
    <property type="match status" value="1"/>
</dbReference>
<dbReference type="SUPFAM" id="SSF57302">
    <property type="entry name" value="Snake toxin-like"/>
    <property type="match status" value="1"/>
</dbReference>
<dbReference type="PROSITE" id="PS50011">
    <property type="entry name" value="PROTEIN_KINASE_DOM"/>
    <property type="match status" value="1"/>
</dbReference>
<dbReference type="PROSITE" id="PS00108">
    <property type="entry name" value="PROTEIN_KINASE_ST"/>
    <property type="match status" value="1"/>
</dbReference>
<comment type="function">
    <text evidence="6 7 9 10">On ligand binding, forms a receptor complex consisting of two type II and two type I transmembrane serine/threonine kinases. Type II receptors phosphorylate and activate type I receptors which autophosphorylate, then bind and activate SMAD transcriptional regulators. Receptor for activin A, activin B and inhibin A. May modulate neuropeptide expression in dorsal root ganglia (DRG) neurons and ovarian follicle development.</text>
</comment>
<comment type="catalytic activity">
    <reaction>
        <text>L-threonyl-[receptor-protein] + ATP = O-phospho-L-threonyl-[receptor-protein] + ADP + H(+)</text>
        <dbReference type="Rhea" id="RHEA:44880"/>
        <dbReference type="Rhea" id="RHEA-COMP:11024"/>
        <dbReference type="Rhea" id="RHEA-COMP:11025"/>
        <dbReference type="ChEBI" id="CHEBI:15378"/>
        <dbReference type="ChEBI" id="CHEBI:30013"/>
        <dbReference type="ChEBI" id="CHEBI:30616"/>
        <dbReference type="ChEBI" id="CHEBI:61977"/>
        <dbReference type="ChEBI" id="CHEBI:456216"/>
        <dbReference type="EC" id="2.7.11.30"/>
    </reaction>
</comment>
<comment type="catalytic activity">
    <reaction>
        <text>L-seryl-[receptor-protein] + ATP = O-phospho-L-seryl-[receptor-protein] + ADP + H(+)</text>
        <dbReference type="Rhea" id="RHEA:18673"/>
        <dbReference type="Rhea" id="RHEA-COMP:11022"/>
        <dbReference type="Rhea" id="RHEA-COMP:11023"/>
        <dbReference type="ChEBI" id="CHEBI:15378"/>
        <dbReference type="ChEBI" id="CHEBI:29999"/>
        <dbReference type="ChEBI" id="CHEBI:30616"/>
        <dbReference type="ChEBI" id="CHEBI:83421"/>
        <dbReference type="ChEBI" id="CHEBI:456216"/>
        <dbReference type="EC" id="2.7.11.30"/>
    </reaction>
</comment>
<comment type="cofactor">
    <cofactor evidence="1">
        <name>Mg(2+)</name>
        <dbReference type="ChEBI" id="CHEBI:18420"/>
    </cofactor>
    <cofactor evidence="1">
        <name>Mn(2+)</name>
        <dbReference type="ChEBI" id="CHEBI:29035"/>
    </cofactor>
</comment>
<comment type="subcellular location">
    <subcellularLocation>
        <location evidence="1">Membrane</location>
        <topology evidence="1">Single-pass type I membrane protein</topology>
    </subcellularLocation>
</comment>
<comment type="tissue specificity">
    <text evidence="8 9">Not expressed in hen anterior pituitary during the ovulatory cycle but expressed in the ovarian follicle.</text>
</comment>
<comment type="developmental stage">
    <text evidence="6 7 10">Expressed during the differentiation of neuroepithelium, of myotomes to muscle and of surface extoderm. Expressed in the dorsal root ganglia (DRG).</text>
</comment>
<comment type="induction">
    <text evidence="10">By activin.</text>
</comment>
<comment type="similarity">
    <text evidence="11">Belongs to the protein kinase superfamily. TKL Ser/Thr protein kinase family. TGFB receptor subfamily.</text>
</comment>
<gene>
    <name type="primary">ACVR2B</name>
</gene>
<name>AVR2B_CHICK</name>
<protein>
    <recommendedName>
        <fullName>Activin receptor type-2B</fullName>
        <ecNumber>2.7.11.30</ecNumber>
    </recommendedName>
    <alternativeName>
        <fullName>Activin receptor type IIB</fullName>
        <shortName>ACTR-IIB</shortName>
    </alternativeName>
</protein>
<evidence type="ECO:0000250" key="1"/>
<evidence type="ECO:0000250" key="2">
    <source>
        <dbReference type="UniProtKB" id="P38445"/>
    </source>
</evidence>
<evidence type="ECO:0000255" key="3"/>
<evidence type="ECO:0000255" key="4">
    <source>
        <dbReference type="PROSITE-ProRule" id="PRU00159"/>
    </source>
</evidence>
<evidence type="ECO:0000255" key="5">
    <source>
        <dbReference type="PROSITE-ProRule" id="PRU10027"/>
    </source>
</evidence>
<evidence type="ECO:0000269" key="6">
    <source>
    </source>
</evidence>
<evidence type="ECO:0000269" key="7">
    <source>
    </source>
</evidence>
<evidence type="ECO:0000269" key="8">
    <source>
    </source>
</evidence>
<evidence type="ECO:0000269" key="9">
    <source>
    </source>
</evidence>
<evidence type="ECO:0000269" key="10">
    <source>
    </source>
</evidence>
<evidence type="ECO:0000305" key="11"/>
<feature type="signal peptide" evidence="3">
    <location>
        <begin position="1"/>
        <end position="24"/>
    </location>
</feature>
<feature type="chain" id="PRO_0000269546" description="Activin receptor type-2B">
    <location>
        <begin position="25"/>
        <end position="512"/>
    </location>
</feature>
<feature type="topological domain" description="Extracellular" evidence="3">
    <location>
        <begin position="25"/>
        <end position="137"/>
    </location>
</feature>
<feature type="transmembrane region" description="Helical" evidence="3">
    <location>
        <begin position="138"/>
        <end position="158"/>
    </location>
</feature>
<feature type="topological domain" description="Cytoplasmic" evidence="3">
    <location>
        <begin position="159"/>
        <end position="512"/>
    </location>
</feature>
<feature type="domain" description="Protein kinase" evidence="4">
    <location>
        <begin position="190"/>
        <end position="478"/>
    </location>
</feature>
<feature type="active site" description="Proton acceptor" evidence="4 5">
    <location>
        <position position="321"/>
    </location>
</feature>
<feature type="binding site" evidence="4">
    <location>
        <begin position="196"/>
        <end position="204"/>
    </location>
    <ligand>
        <name>ATP</name>
        <dbReference type="ChEBI" id="CHEBI:30616"/>
    </ligand>
</feature>
<feature type="binding site" evidence="4">
    <location>
        <position position="217"/>
    </location>
    <ligand>
        <name>ATP</name>
        <dbReference type="ChEBI" id="CHEBI:30616"/>
    </ligand>
</feature>
<feature type="glycosylation site" description="N-linked (GlcNAc...) asparagine" evidence="3">
    <location>
        <position position="42"/>
    </location>
</feature>
<feature type="glycosylation site" description="N-linked (GlcNAc...) asparagine" evidence="3">
    <location>
        <position position="65"/>
    </location>
</feature>
<feature type="disulfide bond" evidence="2">
    <location>
        <begin position="29"/>
        <end position="59"/>
    </location>
</feature>
<feature type="disulfide bond" evidence="2">
    <location>
        <begin position="49"/>
        <end position="77"/>
    </location>
</feature>
<feature type="disulfide bond" evidence="2">
    <location>
        <begin position="84"/>
        <end position="103"/>
    </location>
</feature>
<feature type="disulfide bond" evidence="2">
    <location>
        <begin position="90"/>
        <end position="102"/>
    </location>
</feature>
<feature type="disulfide bond" evidence="2">
    <location>
        <begin position="104"/>
        <end position="109"/>
    </location>
</feature>